<feature type="chain" id="PRO_0000258071" description="Leucyl/phenylalanyl-tRNA--protein transferase">
    <location>
        <begin position="1"/>
        <end position="232"/>
    </location>
</feature>
<reference key="1">
    <citation type="submission" date="2005-08" db="EMBL/GenBank/DDBJ databases">
        <title>Complete sequence of chromosome 1 of Nitrosospira multiformis ATCC 25196.</title>
        <authorList>
            <person name="Copeland A."/>
            <person name="Lucas S."/>
            <person name="Lapidus A."/>
            <person name="Barry K."/>
            <person name="Detter J.C."/>
            <person name="Glavina T."/>
            <person name="Hammon N."/>
            <person name="Israni S."/>
            <person name="Pitluck S."/>
            <person name="Chain P."/>
            <person name="Malfatti S."/>
            <person name="Shin M."/>
            <person name="Vergez L."/>
            <person name="Schmutz J."/>
            <person name="Larimer F."/>
            <person name="Land M."/>
            <person name="Hauser L."/>
            <person name="Kyrpides N."/>
            <person name="Lykidis A."/>
            <person name="Richardson P."/>
        </authorList>
    </citation>
    <scope>NUCLEOTIDE SEQUENCE [LARGE SCALE GENOMIC DNA]</scope>
    <source>
        <strain>ATCC 25196 / NCIMB 11849 / C 71</strain>
    </source>
</reference>
<organism>
    <name type="scientific">Nitrosospira multiformis (strain ATCC 25196 / NCIMB 11849 / C 71)</name>
    <dbReference type="NCBI Taxonomy" id="323848"/>
    <lineage>
        <taxon>Bacteria</taxon>
        <taxon>Pseudomonadati</taxon>
        <taxon>Pseudomonadota</taxon>
        <taxon>Betaproteobacteria</taxon>
        <taxon>Nitrosomonadales</taxon>
        <taxon>Nitrosomonadaceae</taxon>
        <taxon>Nitrosospira</taxon>
    </lineage>
</organism>
<evidence type="ECO:0000255" key="1">
    <source>
        <dbReference type="HAMAP-Rule" id="MF_00688"/>
    </source>
</evidence>
<accession>Q2Y5H5</accession>
<gene>
    <name evidence="1" type="primary">aat</name>
    <name type="ordered locus">Nmul_A2709</name>
</gene>
<proteinExistence type="inferred from homology"/>
<keyword id="KW-0012">Acyltransferase</keyword>
<keyword id="KW-0963">Cytoplasm</keyword>
<keyword id="KW-1185">Reference proteome</keyword>
<keyword id="KW-0808">Transferase</keyword>
<protein>
    <recommendedName>
        <fullName evidence="1">Leucyl/phenylalanyl-tRNA--protein transferase</fullName>
        <ecNumber evidence="1">2.3.2.6</ecNumber>
    </recommendedName>
    <alternativeName>
        <fullName evidence="1">L/F-transferase</fullName>
    </alternativeName>
    <alternativeName>
        <fullName evidence="1">Leucyltransferase</fullName>
    </alternativeName>
    <alternativeName>
        <fullName evidence="1">Phenyalanyltransferase</fullName>
    </alternativeName>
</protein>
<sequence>MIPWLSSDSLFPPLHTALIQPNGLLAVGGDLSPRRLIEAYSQGIFPWFNDGDPILWWSPDPRMVLFPRELKVSRSLQKSLRKGNYEIRTDRNFTPVMRACAAPRRDSCGTWIQNKMIFAYSALHEMGFAHSVETWMDGELVGGLYGVALGRVFFGESMFSRVSNASKIAFVHLVRQLERWGFEMIDCQMKTAHLASLGAREIPREEFSQRLKELVNYMERGEKWCFDHEQVE</sequence>
<comment type="function">
    <text evidence="1">Functions in the N-end rule pathway of protein degradation where it conjugates Leu, Phe and, less efficiently, Met from aminoacyl-tRNAs to the N-termini of proteins containing an N-terminal arginine or lysine.</text>
</comment>
<comment type="catalytic activity">
    <reaction evidence="1">
        <text>N-terminal L-lysyl-[protein] + L-leucyl-tRNA(Leu) = N-terminal L-leucyl-L-lysyl-[protein] + tRNA(Leu) + H(+)</text>
        <dbReference type="Rhea" id="RHEA:12340"/>
        <dbReference type="Rhea" id="RHEA-COMP:9613"/>
        <dbReference type="Rhea" id="RHEA-COMP:9622"/>
        <dbReference type="Rhea" id="RHEA-COMP:12670"/>
        <dbReference type="Rhea" id="RHEA-COMP:12671"/>
        <dbReference type="ChEBI" id="CHEBI:15378"/>
        <dbReference type="ChEBI" id="CHEBI:65249"/>
        <dbReference type="ChEBI" id="CHEBI:78442"/>
        <dbReference type="ChEBI" id="CHEBI:78494"/>
        <dbReference type="ChEBI" id="CHEBI:133043"/>
        <dbReference type="EC" id="2.3.2.6"/>
    </reaction>
</comment>
<comment type="catalytic activity">
    <reaction evidence="1">
        <text>N-terminal L-arginyl-[protein] + L-leucyl-tRNA(Leu) = N-terminal L-leucyl-L-arginyl-[protein] + tRNA(Leu) + H(+)</text>
        <dbReference type="Rhea" id="RHEA:50416"/>
        <dbReference type="Rhea" id="RHEA-COMP:9613"/>
        <dbReference type="Rhea" id="RHEA-COMP:9622"/>
        <dbReference type="Rhea" id="RHEA-COMP:12672"/>
        <dbReference type="Rhea" id="RHEA-COMP:12673"/>
        <dbReference type="ChEBI" id="CHEBI:15378"/>
        <dbReference type="ChEBI" id="CHEBI:64719"/>
        <dbReference type="ChEBI" id="CHEBI:78442"/>
        <dbReference type="ChEBI" id="CHEBI:78494"/>
        <dbReference type="ChEBI" id="CHEBI:133044"/>
        <dbReference type="EC" id="2.3.2.6"/>
    </reaction>
</comment>
<comment type="catalytic activity">
    <reaction evidence="1">
        <text>L-phenylalanyl-tRNA(Phe) + an N-terminal L-alpha-aminoacyl-[protein] = an N-terminal L-phenylalanyl-L-alpha-aminoacyl-[protein] + tRNA(Phe)</text>
        <dbReference type="Rhea" id="RHEA:43632"/>
        <dbReference type="Rhea" id="RHEA-COMP:9668"/>
        <dbReference type="Rhea" id="RHEA-COMP:9699"/>
        <dbReference type="Rhea" id="RHEA-COMP:10636"/>
        <dbReference type="Rhea" id="RHEA-COMP:10637"/>
        <dbReference type="ChEBI" id="CHEBI:78442"/>
        <dbReference type="ChEBI" id="CHEBI:78531"/>
        <dbReference type="ChEBI" id="CHEBI:78597"/>
        <dbReference type="ChEBI" id="CHEBI:83561"/>
        <dbReference type="EC" id="2.3.2.6"/>
    </reaction>
</comment>
<comment type="subcellular location">
    <subcellularLocation>
        <location evidence="1">Cytoplasm</location>
    </subcellularLocation>
</comment>
<comment type="similarity">
    <text evidence="1">Belongs to the L/F-transferase family.</text>
</comment>
<name>LFTR_NITMU</name>
<dbReference type="EC" id="2.3.2.6" evidence="1"/>
<dbReference type="EMBL" id="CP000103">
    <property type="protein sequence ID" value="ABB75996.1"/>
    <property type="molecule type" value="Genomic_DNA"/>
</dbReference>
<dbReference type="RefSeq" id="WP_011381988.1">
    <property type="nucleotide sequence ID" value="NC_007614.1"/>
</dbReference>
<dbReference type="SMR" id="Q2Y5H5"/>
<dbReference type="STRING" id="323848.Nmul_A2709"/>
<dbReference type="KEGG" id="nmu:Nmul_A2709"/>
<dbReference type="eggNOG" id="COG2360">
    <property type="taxonomic scope" value="Bacteria"/>
</dbReference>
<dbReference type="HOGENOM" id="CLU_075045_0_0_4"/>
<dbReference type="OrthoDB" id="9790282at2"/>
<dbReference type="Proteomes" id="UP000002718">
    <property type="component" value="Chromosome"/>
</dbReference>
<dbReference type="GO" id="GO:0005737">
    <property type="term" value="C:cytoplasm"/>
    <property type="evidence" value="ECO:0007669"/>
    <property type="project" value="UniProtKB-SubCell"/>
</dbReference>
<dbReference type="GO" id="GO:0008914">
    <property type="term" value="F:leucyl-tRNA--protein transferase activity"/>
    <property type="evidence" value="ECO:0007669"/>
    <property type="project" value="UniProtKB-UniRule"/>
</dbReference>
<dbReference type="GO" id="GO:0030163">
    <property type="term" value="P:protein catabolic process"/>
    <property type="evidence" value="ECO:0007669"/>
    <property type="project" value="UniProtKB-UniRule"/>
</dbReference>
<dbReference type="FunFam" id="3.30.70.3550:FF:000001">
    <property type="entry name" value="Leucyl/phenylalanyl-tRNA--protein transferase"/>
    <property type="match status" value="1"/>
</dbReference>
<dbReference type="FunFam" id="3.40.630.70:FF:000001">
    <property type="entry name" value="Leucyl/phenylalanyl-tRNA--protein transferase"/>
    <property type="match status" value="1"/>
</dbReference>
<dbReference type="Gene3D" id="3.40.630.70">
    <property type="entry name" value="Leucyl/phenylalanyl-tRNA-protein transferase, C-terminal domain"/>
    <property type="match status" value="1"/>
</dbReference>
<dbReference type="Gene3D" id="3.30.70.3550">
    <property type="entry name" value="Leucyl/phenylalanyl-tRNA-protein transferase, N-terminal domain"/>
    <property type="match status" value="1"/>
</dbReference>
<dbReference type="HAMAP" id="MF_00688">
    <property type="entry name" value="Leu_Phe_trans"/>
    <property type="match status" value="1"/>
</dbReference>
<dbReference type="InterPro" id="IPR016181">
    <property type="entry name" value="Acyl_CoA_acyltransferase"/>
</dbReference>
<dbReference type="InterPro" id="IPR004616">
    <property type="entry name" value="Leu/Phe-tRNA_Trfase"/>
</dbReference>
<dbReference type="InterPro" id="IPR042203">
    <property type="entry name" value="Leu/Phe-tRNA_Trfase_C"/>
</dbReference>
<dbReference type="InterPro" id="IPR042221">
    <property type="entry name" value="Leu/Phe-tRNA_Trfase_N"/>
</dbReference>
<dbReference type="NCBIfam" id="TIGR00667">
    <property type="entry name" value="aat"/>
    <property type="match status" value="1"/>
</dbReference>
<dbReference type="PANTHER" id="PTHR30098">
    <property type="entry name" value="LEUCYL/PHENYLALANYL-TRNA--PROTEIN TRANSFERASE"/>
    <property type="match status" value="1"/>
</dbReference>
<dbReference type="PANTHER" id="PTHR30098:SF2">
    <property type="entry name" value="LEUCYL_PHENYLALANYL-TRNA--PROTEIN TRANSFERASE"/>
    <property type="match status" value="1"/>
</dbReference>
<dbReference type="Pfam" id="PF03588">
    <property type="entry name" value="Leu_Phe_trans"/>
    <property type="match status" value="1"/>
</dbReference>
<dbReference type="SUPFAM" id="SSF55729">
    <property type="entry name" value="Acyl-CoA N-acyltransferases (Nat)"/>
    <property type="match status" value="1"/>
</dbReference>